<dbReference type="EC" id="1.2.1.41" evidence="1"/>
<dbReference type="EMBL" id="CP000096">
    <property type="protein sequence ID" value="ABB24338.1"/>
    <property type="status" value="ALT_INIT"/>
    <property type="molecule type" value="Genomic_DNA"/>
</dbReference>
<dbReference type="SMR" id="Q3B2U3"/>
<dbReference type="STRING" id="319225.Plut_1479"/>
<dbReference type="KEGG" id="plt:Plut_1479"/>
<dbReference type="eggNOG" id="COG0014">
    <property type="taxonomic scope" value="Bacteria"/>
</dbReference>
<dbReference type="HOGENOM" id="CLU_030231_0_0_10"/>
<dbReference type="UniPathway" id="UPA00098">
    <property type="reaction ID" value="UER00360"/>
</dbReference>
<dbReference type="Proteomes" id="UP000002709">
    <property type="component" value="Chromosome"/>
</dbReference>
<dbReference type="GO" id="GO:0005737">
    <property type="term" value="C:cytoplasm"/>
    <property type="evidence" value="ECO:0007669"/>
    <property type="project" value="UniProtKB-SubCell"/>
</dbReference>
<dbReference type="GO" id="GO:0004350">
    <property type="term" value="F:glutamate-5-semialdehyde dehydrogenase activity"/>
    <property type="evidence" value="ECO:0007669"/>
    <property type="project" value="UniProtKB-UniRule"/>
</dbReference>
<dbReference type="GO" id="GO:0050661">
    <property type="term" value="F:NADP binding"/>
    <property type="evidence" value="ECO:0007669"/>
    <property type="project" value="InterPro"/>
</dbReference>
<dbReference type="GO" id="GO:0055129">
    <property type="term" value="P:L-proline biosynthetic process"/>
    <property type="evidence" value="ECO:0007669"/>
    <property type="project" value="UniProtKB-UniRule"/>
</dbReference>
<dbReference type="CDD" id="cd07079">
    <property type="entry name" value="ALDH_F18-19_ProA-GPR"/>
    <property type="match status" value="1"/>
</dbReference>
<dbReference type="Gene3D" id="3.40.605.10">
    <property type="entry name" value="Aldehyde Dehydrogenase, Chain A, domain 1"/>
    <property type="match status" value="1"/>
</dbReference>
<dbReference type="Gene3D" id="3.40.309.10">
    <property type="entry name" value="Aldehyde Dehydrogenase, Chain A, domain 2"/>
    <property type="match status" value="1"/>
</dbReference>
<dbReference type="HAMAP" id="MF_00412">
    <property type="entry name" value="ProA"/>
    <property type="match status" value="1"/>
</dbReference>
<dbReference type="InterPro" id="IPR016161">
    <property type="entry name" value="Ald_DH/histidinol_DH"/>
</dbReference>
<dbReference type="InterPro" id="IPR016163">
    <property type="entry name" value="Ald_DH_C"/>
</dbReference>
<dbReference type="InterPro" id="IPR016162">
    <property type="entry name" value="Ald_DH_N"/>
</dbReference>
<dbReference type="InterPro" id="IPR015590">
    <property type="entry name" value="Aldehyde_DH_dom"/>
</dbReference>
<dbReference type="InterPro" id="IPR020593">
    <property type="entry name" value="G-glutamylP_reductase_CS"/>
</dbReference>
<dbReference type="InterPro" id="IPR012134">
    <property type="entry name" value="Glu-5-SA_DH"/>
</dbReference>
<dbReference type="InterPro" id="IPR000965">
    <property type="entry name" value="GPR_dom"/>
</dbReference>
<dbReference type="NCBIfam" id="NF001221">
    <property type="entry name" value="PRK00197.1"/>
    <property type="match status" value="1"/>
</dbReference>
<dbReference type="NCBIfam" id="TIGR00407">
    <property type="entry name" value="proA"/>
    <property type="match status" value="1"/>
</dbReference>
<dbReference type="PANTHER" id="PTHR11063:SF8">
    <property type="entry name" value="DELTA-1-PYRROLINE-5-CARBOXYLATE SYNTHASE"/>
    <property type="match status" value="1"/>
</dbReference>
<dbReference type="PANTHER" id="PTHR11063">
    <property type="entry name" value="GLUTAMATE SEMIALDEHYDE DEHYDROGENASE"/>
    <property type="match status" value="1"/>
</dbReference>
<dbReference type="Pfam" id="PF00171">
    <property type="entry name" value="Aldedh"/>
    <property type="match status" value="1"/>
</dbReference>
<dbReference type="PIRSF" id="PIRSF000151">
    <property type="entry name" value="GPR"/>
    <property type="match status" value="1"/>
</dbReference>
<dbReference type="SUPFAM" id="SSF53720">
    <property type="entry name" value="ALDH-like"/>
    <property type="match status" value="1"/>
</dbReference>
<dbReference type="PROSITE" id="PS01223">
    <property type="entry name" value="PROA"/>
    <property type="match status" value="1"/>
</dbReference>
<proteinExistence type="inferred from homology"/>
<organism>
    <name type="scientific">Chlorobium luteolum (strain DSM 273 / BCRC 81028 / 2530)</name>
    <name type="common">Pelodictyon luteolum</name>
    <dbReference type="NCBI Taxonomy" id="319225"/>
    <lineage>
        <taxon>Bacteria</taxon>
        <taxon>Pseudomonadati</taxon>
        <taxon>Chlorobiota</taxon>
        <taxon>Chlorobiia</taxon>
        <taxon>Chlorobiales</taxon>
        <taxon>Chlorobiaceae</taxon>
        <taxon>Chlorobium/Pelodictyon group</taxon>
        <taxon>Pelodictyon</taxon>
    </lineage>
</organism>
<feature type="chain" id="PRO_0000230010" description="Gamma-glutamyl phosphate reductase">
    <location>
        <begin position="1"/>
        <end position="420"/>
    </location>
</feature>
<sequence>MTLSDTIMEQLEAVRQASRNIVTLSDQNINKVLEDLAGRITSSAQAILEANRKDLEKMERSNPMYDRLLLDEKRLEGIAADMRNVASLPSPLDITLEERTLSSGLSLRKASVPIGVIGIIYEARPNVTFDVFALCLKSGNATVLKGGSDADHSNRAIAELIHTVLQDHGISPDILYLLPSEREAATIMMEAVGKIDMIIPRGSQQLIDHVRNTAKVPVIETGAGIVHTYVDRDADMEMAKAIVLNAKTRRPSVCNALDTLIIHSDRLGDLAELCRPLSEHQVIIFADKRSYLELLPSYPATLLKHAEPEHYGTEFLSLKMSVKTVDTLDEALSHIATYSSRHSEALITRDNAVKAEFFKRVDAAVVYHNASTAFTDGAQFGLGAEIGISTQKLHARGPMALKELTTYKWMIEGDGQTRPL</sequence>
<protein>
    <recommendedName>
        <fullName evidence="1">Gamma-glutamyl phosphate reductase</fullName>
        <shortName evidence="1">GPR</shortName>
        <ecNumber evidence="1">1.2.1.41</ecNumber>
    </recommendedName>
    <alternativeName>
        <fullName evidence="1">Glutamate-5-semialdehyde dehydrogenase</fullName>
    </alternativeName>
    <alternativeName>
        <fullName evidence="1">Glutamyl-gamma-semialdehyde dehydrogenase</fullName>
        <shortName evidence="1">GSA dehydrogenase</shortName>
    </alternativeName>
</protein>
<comment type="function">
    <text evidence="1">Catalyzes the NADPH-dependent reduction of L-glutamate 5-phosphate into L-glutamate 5-semialdehyde and phosphate. The product spontaneously undergoes cyclization to form 1-pyrroline-5-carboxylate.</text>
</comment>
<comment type="catalytic activity">
    <reaction evidence="1">
        <text>L-glutamate 5-semialdehyde + phosphate + NADP(+) = L-glutamyl 5-phosphate + NADPH + H(+)</text>
        <dbReference type="Rhea" id="RHEA:19541"/>
        <dbReference type="ChEBI" id="CHEBI:15378"/>
        <dbReference type="ChEBI" id="CHEBI:43474"/>
        <dbReference type="ChEBI" id="CHEBI:57783"/>
        <dbReference type="ChEBI" id="CHEBI:58066"/>
        <dbReference type="ChEBI" id="CHEBI:58274"/>
        <dbReference type="ChEBI" id="CHEBI:58349"/>
        <dbReference type="EC" id="1.2.1.41"/>
    </reaction>
</comment>
<comment type="pathway">
    <text evidence="1">Amino-acid biosynthesis; L-proline biosynthesis; L-glutamate 5-semialdehyde from L-glutamate: step 2/2.</text>
</comment>
<comment type="subcellular location">
    <subcellularLocation>
        <location evidence="1">Cytoplasm</location>
    </subcellularLocation>
</comment>
<comment type="similarity">
    <text evidence="1">Belongs to the gamma-glutamyl phosphate reductase family.</text>
</comment>
<comment type="sequence caution" evidence="2">
    <conflict type="erroneous initiation">
        <sequence resource="EMBL-CDS" id="ABB24338"/>
    </conflict>
</comment>
<accession>Q3B2U3</accession>
<evidence type="ECO:0000255" key="1">
    <source>
        <dbReference type="HAMAP-Rule" id="MF_00412"/>
    </source>
</evidence>
<evidence type="ECO:0000305" key="2"/>
<name>PROA_CHLL3</name>
<keyword id="KW-0028">Amino-acid biosynthesis</keyword>
<keyword id="KW-0963">Cytoplasm</keyword>
<keyword id="KW-0521">NADP</keyword>
<keyword id="KW-0560">Oxidoreductase</keyword>
<keyword id="KW-0641">Proline biosynthesis</keyword>
<keyword id="KW-1185">Reference proteome</keyword>
<gene>
    <name evidence="1" type="primary">proA</name>
    <name type="ordered locus">Plut_1479</name>
</gene>
<reference key="1">
    <citation type="submission" date="2005-08" db="EMBL/GenBank/DDBJ databases">
        <title>Complete sequence of Pelodictyon luteolum DSM 273.</title>
        <authorList>
            <consortium name="US DOE Joint Genome Institute"/>
            <person name="Copeland A."/>
            <person name="Lucas S."/>
            <person name="Lapidus A."/>
            <person name="Barry K."/>
            <person name="Detter J.C."/>
            <person name="Glavina T."/>
            <person name="Hammon N."/>
            <person name="Israni S."/>
            <person name="Pitluck S."/>
            <person name="Bryant D."/>
            <person name="Schmutz J."/>
            <person name="Larimer F."/>
            <person name="Land M."/>
            <person name="Kyrpides N."/>
            <person name="Ivanova N."/>
            <person name="Richardson P."/>
        </authorList>
    </citation>
    <scope>NUCLEOTIDE SEQUENCE [LARGE SCALE GENOMIC DNA]</scope>
    <source>
        <strain>DSM 273 / BCRC 81028 / 2530</strain>
    </source>
</reference>